<proteinExistence type="inferred from homology"/>
<organism>
    <name type="scientific">Klebsiella pneumoniae subsp. pneumoniae (strain ATCC 700721 / MGH 78578)</name>
    <dbReference type="NCBI Taxonomy" id="272620"/>
    <lineage>
        <taxon>Bacteria</taxon>
        <taxon>Pseudomonadati</taxon>
        <taxon>Pseudomonadota</taxon>
        <taxon>Gammaproteobacteria</taxon>
        <taxon>Enterobacterales</taxon>
        <taxon>Enterobacteriaceae</taxon>
        <taxon>Klebsiella/Raoultella group</taxon>
        <taxon>Klebsiella</taxon>
        <taxon>Klebsiella pneumoniae complex</taxon>
    </lineage>
</organism>
<dbReference type="EC" id="2.1.1.61" evidence="1"/>
<dbReference type="EC" id="1.5.-.-" evidence="1"/>
<dbReference type="EMBL" id="CP000647">
    <property type="protein sequence ID" value="ABR78131.1"/>
    <property type="molecule type" value="Genomic_DNA"/>
</dbReference>
<dbReference type="RefSeq" id="WP_015958770.1">
    <property type="nucleotide sequence ID" value="NC_009648.1"/>
</dbReference>
<dbReference type="SMR" id="A6TC10"/>
<dbReference type="STRING" id="272620.KPN_02714"/>
<dbReference type="PaxDb" id="272620-KPN_02714"/>
<dbReference type="EnsemblBacteria" id="ABR78131">
    <property type="protein sequence ID" value="ABR78131"/>
    <property type="gene ID" value="KPN_02714"/>
</dbReference>
<dbReference type="KEGG" id="kpn:KPN_02714"/>
<dbReference type="HOGENOM" id="CLU_022427_1_0_6"/>
<dbReference type="Proteomes" id="UP000000265">
    <property type="component" value="Chromosome"/>
</dbReference>
<dbReference type="GO" id="GO:0005737">
    <property type="term" value="C:cytoplasm"/>
    <property type="evidence" value="ECO:0007669"/>
    <property type="project" value="UniProtKB-SubCell"/>
</dbReference>
<dbReference type="GO" id="GO:0050660">
    <property type="term" value="F:flavin adenine dinucleotide binding"/>
    <property type="evidence" value="ECO:0007669"/>
    <property type="project" value="UniProtKB-UniRule"/>
</dbReference>
<dbReference type="GO" id="GO:0016645">
    <property type="term" value="F:oxidoreductase activity, acting on the CH-NH group of donors"/>
    <property type="evidence" value="ECO:0007669"/>
    <property type="project" value="InterPro"/>
</dbReference>
<dbReference type="GO" id="GO:0004808">
    <property type="term" value="F:tRNA (5-methylaminomethyl-2-thiouridylate)(34)-methyltransferase activity"/>
    <property type="evidence" value="ECO:0007669"/>
    <property type="project" value="UniProtKB-EC"/>
</dbReference>
<dbReference type="GO" id="GO:0032259">
    <property type="term" value="P:methylation"/>
    <property type="evidence" value="ECO:0007669"/>
    <property type="project" value="UniProtKB-KW"/>
</dbReference>
<dbReference type="GO" id="GO:0002098">
    <property type="term" value="P:tRNA wobble uridine modification"/>
    <property type="evidence" value="ECO:0007669"/>
    <property type="project" value="TreeGrafter"/>
</dbReference>
<dbReference type="FunFam" id="3.40.50.150:FF:000107">
    <property type="entry name" value="tRNA 5-methylaminomethyl-2-thiouridine biosynthesis bifunctional protein MnmC"/>
    <property type="match status" value="1"/>
</dbReference>
<dbReference type="Gene3D" id="3.30.9.10">
    <property type="entry name" value="D-Amino Acid Oxidase, subunit A, domain 2"/>
    <property type="match status" value="1"/>
</dbReference>
<dbReference type="Gene3D" id="3.50.50.60">
    <property type="entry name" value="FAD/NAD(P)-binding domain"/>
    <property type="match status" value="1"/>
</dbReference>
<dbReference type="Gene3D" id="3.40.50.150">
    <property type="entry name" value="Vaccinia Virus protein VP39"/>
    <property type="match status" value="1"/>
</dbReference>
<dbReference type="HAMAP" id="MF_01102">
    <property type="entry name" value="MnmC"/>
    <property type="match status" value="1"/>
</dbReference>
<dbReference type="InterPro" id="IPR006076">
    <property type="entry name" value="FAD-dep_OxRdtase"/>
</dbReference>
<dbReference type="InterPro" id="IPR036188">
    <property type="entry name" value="FAD/NAD-bd_sf"/>
</dbReference>
<dbReference type="InterPro" id="IPR008471">
    <property type="entry name" value="MnmC-like_methylTransf"/>
</dbReference>
<dbReference type="InterPro" id="IPR029063">
    <property type="entry name" value="SAM-dependent_MTases_sf"/>
</dbReference>
<dbReference type="InterPro" id="IPR023032">
    <property type="entry name" value="tRNA_MAMT_biosynth_bifunc_MnmC"/>
</dbReference>
<dbReference type="InterPro" id="IPR047785">
    <property type="entry name" value="tRNA_MNMC2"/>
</dbReference>
<dbReference type="InterPro" id="IPR017610">
    <property type="entry name" value="tRNA_S-uridine_synth_MnmC_C"/>
</dbReference>
<dbReference type="NCBIfam" id="TIGR03197">
    <property type="entry name" value="MnmC_Cterm"/>
    <property type="match status" value="1"/>
</dbReference>
<dbReference type="NCBIfam" id="NF002480">
    <property type="entry name" value="PRK01747.1-1"/>
    <property type="match status" value="1"/>
</dbReference>
<dbReference type="NCBIfam" id="NF002481">
    <property type="entry name" value="PRK01747.1-2"/>
    <property type="match status" value="1"/>
</dbReference>
<dbReference type="NCBIfam" id="NF002482">
    <property type="entry name" value="PRK01747.1-3"/>
    <property type="match status" value="1"/>
</dbReference>
<dbReference type="NCBIfam" id="NF002484">
    <property type="entry name" value="PRK01747.1-5"/>
    <property type="match status" value="1"/>
</dbReference>
<dbReference type="NCBIfam" id="NF033855">
    <property type="entry name" value="tRNA_MNMC2"/>
    <property type="match status" value="1"/>
</dbReference>
<dbReference type="PANTHER" id="PTHR13847">
    <property type="entry name" value="SARCOSINE DEHYDROGENASE-RELATED"/>
    <property type="match status" value="1"/>
</dbReference>
<dbReference type="PANTHER" id="PTHR13847:SF283">
    <property type="entry name" value="TRNA 5-METHYLAMINOMETHYL-2-THIOURIDINE BIOSYNTHESIS BIFUNCTIONAL PROTEIN MNMC"/>
    <property type="match status" value="1"/>
</dbReference>
<dbReference type="Pfam" id="PF01266">
    <property type="entry name" value="DAO"/>
    <property type="match status" value="1"/>
</dbReference>
<dbReference type="Pfam" id="PF05430">
    <property type="entry name" value="Methyltransf_30"/>
    <property type="match status" value="1"/>
</dbReference>
<dbReference type="SUPFAM" id="SSF54373">
    <property type="entry name" value="FAD-linked reductases, C-terminal domain"/>
    <property type="match status" value="1"/>
</dbReference>
<dbReference type="SUPFAM" id="SSF51905">
    <property type="entry name" value="FAD/NAD(P)-binding domain"/>
    <property type="match status" value="1"/>
</dbReference>
<dbReference type="SUPFAM" id="SSF53335">
    <property type="entry name" value="S-adenosyl-L-methionine-dependent methyltransferases"/>
    <property type="match status" value="1"/>
</dbReference>
<evidence type="ECO:0000255" key="1">
    <source>
        <dbReference type="HAMAP-Rule" id="MF_01102"/>
    </source>
</evidence>
<accession>A6TC10</accession>
<keyword id="KW-0963">Cytoplasm</keyword>
<keyword id="KW-0274">FAD</keyword>
<keyword id="KW-0285">Flavoprotein</keyword>
<keyword id="KW-0489">Methyltransferase</keyword>
<keyword id="KW-0511">Multifunctional enzyme</keyword>
<keyword id="KW-0560">Oxidoreductase</keyword>
<keyword id="KW-0949">S-adenosyl-L-methionine</keyword>
<keyword id="KW-0808">Transferase</keyword>
<keyword id="KW-0819">tRNA processing</keyword>
<feature type="chain" id="PRO_1000065000" description="tRNA 5-methylaminomethyl-2-thiouridine biosynthesis bifunctional protein MnmC">
    <location>
        <begin position="1"/>
        <end position="662"/>
    </location>
</feature>
<feature type="region of interest" description="tRNA (mnm(5)s(2)U34)-methyltransferase">
    <location>
        <begin position="1"/>
        <end position="245"/>
    </location>
</feature>
<feature type="region of interest" description="FAD-dependent cmnm(5)s(2)U34 oxidoreductase">
    <location>
        <begin position="270"/>
        <end position="662"/>
    </location>
</feature>
<name>MNMC_KLEP7</name>
<protein>
    <recommendedName>
        <fullName evidence="1">tRNA 5-methylaminomethyl-2-thiouridine biosynthesis bifunctional protein MnmC</fullName>
        <shortName evidence="1">tRNA mnm(5)s(2)U biosynthesis bifunctional protein</shortName>
    </recommendedName>
    <domain>
        <recommendedName>
            <fullName evidence="1">tRNA (mnm(5)s(2)U34)-methyltransferase</fullName>
            <ecNumber evidence="1">2.1.1.61</ecNumber>
        </recommendedName>
    </domain>
    <domain>
        <recommendedName>
            <fullName evidence="1">FAD-dependent cmnm(5)s(2)U34 oxidoreductase</fullName>
            <ecNumber evidence="1">1.5.-.-</ecNumber>
        </recommendedName>
    </domain>
</protein>
<comment type="function">
    <text evidence="1">Catalyzes the last two steps in the biosynthesis of 5-methylaminomethyl-2-thiouridine (mnm(5)s(2)U) at the wobble position (U34) in tRNA. Catalyzes the FAD-dependent demodification of cmnm(5)s(2)U34 to nm(5)s(2)U34, followed by the transfer of a methyl group from S-adenosyl-L-methionine to nm(5)s(2)U34, to form mnm(5)s(2)U34.</text>
</comment>
<comment type="catalytic activity">
    <reaction evidence="1">
        <text>5-aminomethyl-2-thiouridine(34) in tRNA + S-adenosyl-L-methionine = 5-methylaminomethyl-2-thiouridine(34) in tRNA + S-adenosyl-L-homocysteine + H(+)</text>
        <dbReference type="Rhea" id="RHEA:19569"/>
        <dbReference type="Rhea" id="RHEA-COMP:10195"/>
        <dbReference type="Rhea" id="RHEA-COMP:10197"/>
        <dbReference type="ChEBI" id="CHEBI:15378"/>
        <dbReference type="ChEBI" id="CHEBI:57856"/>
        <dbReference type="ChEBI" id="CHEBI:59789"/>
        <dbReference type="ChEBI" id="CHEBI:74454"/>
        <dbReference type="ChEBI" id="CHEBI:74455"/>
        <dbReference type="EC" id="2.1.1.61"/>
    </reaction>
</comment>
<comment type="cofactor">
    <cofactor evidence="1">
        <name>FAD</name>
        <dbReference type="ChEBI" id="CHEBI:57692"/>
    </cofactor>
</comment>
<comment type="subcellular location">
    <subcellularLocation>
        <location evidence="1">Cytoplasm</location>
    </subcellularLocation>
</comment>
<comment type="similarity">
    <text evidence="1">In the N-terminal section; belongs to the methyltransferase superfamily. tRNA (mnm(5)s(2)U34)-methyltransferase family.</text>
</comment>
<comment type="similarity">
    <text evidence="1">In the C-terminal section; belongs to the DAO family.</text>
</comment>
<sequence>MKQNAIQPANLEFNAEGTPVSRDFDDVYFSNDNGLEETRYVFLGGNRLPERFPSHPRPLMIVAESGFGTGLNFLTLWQAFDVFVRDNPNVTLQRLHFISFEKYPLKAEDLRLAHQRWPELAPWAQQLQAQWPSAFGGCHRLLLDGGRVTLDLWFGDINELTRELDDSLNQQVDAWFLDGFAPAKNPDMWTQDLFSAMARLARPGGTLATFTSAGFVRRGLQEAGFTMRKSKGFGRKREMLTGEMAQTLSFPARVPWFARSSSDAREAAIIGGGIASALLSLALLRRGWQVTLYCADEAPAQGASGNRQGALYPLLSQHDPALARFFPAAFTFARRMYDALPVMFDHQWCGVTQLGWDEKSTHKIAQMLALNLPPDIACAVTAEQVAGLTGVDTGCGGITYPAGGWLCPQQLTAELLALAATRGLHVHYGYPVETLSAEGDGWLLNQQRYHQAVVLANGHRITGFAQTAQLPVYPVGGQVSHIPTTPRLAALRQVLCYDGYLTPQNPQNQQHCIGASYHRGNTDTTFSEEDQQHNRQRLIDCFPGAEWPQDVDISANDARCGVRCATRDHLPMVGNVPDYAATLTQYASLHEQPDIADSAPVCRNLFMLGALGSRGLCTAPLSAELLAAQMSAEPLPLDSDTLAALNPNRLWVRKLLKGKAVK</sequence>
<reference key="1">
    <citation type="submission" date="2006-09" db="EMBL/GenBank/DDBJ databases">
        <authorList>
            <consortium name="The Klebsiella pneumonia Genome Sequencing Project"/>
            <person name="McClelland M."/>
            <person name="Sanderson E.K."/>
            <person name="Spieth J."/>
            <person name="Clifton W.S."/>
            <person name="Latreille P."/>
            <person name="Sabo A."/>
            <person name="Pepin K."/>
            <person name="Bhonagiri V."/>
            <person name="Porwollik S."/>
            <person name="Ali J."/>
            <person name="Wilson R.K."/>
        </authorList>
    </citation>
    <scope>NUCLEOTIDE SEQUENCE [LARGE SCALE GENOMIC DNA]</scope>
    <source>
        <strain>ATCC 700721 / MGH 78578</strain>
    </source>
</reference>
<gene>
    <name evidence="1" type="primary">mnmC</name>
    <name type="ordered locus">KPN78578_26700</name>
    <name type="ORF">KPN_02714</name>
</gene>